<proteinExistence type="inferred from homology"/>
<evidence type="ECO:0000255" key="1">
    <source>
        <dbReference type="HAMAP-Rule" id="MF_01201"/>
    </source>
</evidence>
<protein>
    <recommendedName>
        <fullName evidence="1">Alanine racemase</fullName>
        <ecNumber evidence="1">5.1.1.1</ecNumber>
    </recommendedName>
</protein>
<name>ALR_STRU0</name>
<dbReference type="EC" id="5.1.1.1" evidence="1"/>
<dbReference type="EMBL" id="AM946015">
    <property type="protein sequence ID" value="CAR43287.1"/>
    <property type="molecule type" value="Genomic_DNA"/>
</dbReference>
<dbReference type="RefSeq" id="WP_015911843.1">
    <property type="nucleotide sequence ID" value="NC_012004.1"/>
</dbReference>
<dbReference type="SMR" id="B9DVI3"/>
<dbReference type="STRING" id="218495.SUB1535"/>
<dbReference type="KEGG" id="sub:SUB1535"/>
<dbReference type="eggNOG" id="COG0787">
    <property type="taxonomic scope" value="Bacteria"/>
</dbReference>
<dbReference type="HOGENOM" id="CLU_028393_2_1_9"/>
<dbReference type="OrthoDB" id="9813814at2"/>
<dbReference type="UniPathway" id="UPA00042">
    <property type="reaction ID" value="UER00497"/>
</dbReference>
<dbReference type="Proteomes" id="UP000000449">
    <property type="component" value="Chromosome"/>
</dbReference>
<dbReference type="GO" id="GO:0005829">
    <property type="term" value="C:cytosol"/>
    <property type="evidence" value="ECO:0007669"/>
    <property type="project" value="TreeGrafter"/>
</dbReference>
<dbReference type="GO" id="GO:0008784">
    <property type="term" value="F:alanine racemase activity"/>
    <property type="evidence" value="ECO:0007669"/>
    <property type="project" value="UniProtKB-UniRule"/>
</dbReference>
<dbReference type="GO" id="GO:0030170">
    <property type="term" value="F:pyridoxal phosphate binding"/>
    <property type="evidence" value="ECO:0007669"/>
    <property type="project" value="UniProtKB-UniRule"/>
</dbReference>
<dbReference type="GO" id="GO:0030632">
    <property type="term" value="P:D-alanine biosynthetic process"/>
    <property type="evidence" value="ECO:0007669"/>
    <property type="project" value="UniProtKB-UniRule"/>
</dbReference>
<dbReference type="GO" id="GO:0009252">
    <property type="term" value="P:peptidoglycan biosynthetic process"/>
    <property type="evidence" value="ECO:0007669"/>
    <property type="project" value="TreeGrafter"/>
</dbReference>
<dbReference type="CDD" id="cd00430">
    <property type="entry name" value="PLPDE_III_AR"/>
    <property type="match status" value="1"/>
</dbReference>
<dbReference type="FunFam" id="2.40.37.10:FF:000006">
    <property type="entry name" value="Alanine racemase"/>
    <property type="match status" value="1"/>
</dbReference>
<dbReference type="FunFam" id="3.20.20.10:FF:000002">
    <property type="entry name" value="Alanine racemase"/>
    <property type="match status" value="1"/>
</dbReference>
<dbReference type="Gene3D" id="3.20.20.10">
    <property type="entry name" value="Alanine racemase"/>
    <property type="match status" value="1"/>
</dbReference>
<dbReference type="Gene3D" id="2.40.37.10">
    <property type="entry name" value="Lyase, Ornithine Decarboxylase, Chain A, domain 1"/>
    <property type="match status" value="1"/>
</dbReference>
<dbReference type="HAMAP" id="MF_01201">
    <property type="entry name" value="Ala_racemase"/>
    <property type="match status" value="1"/>
</dbReference>
<dbReference type="InterPro" id="IPR000821">
    <property type="entry name" value="Ala_racemase"/>
</dbReference>
<dbReference type="InterPro" id="IPR009006">
    <property type="entry name" value="Ala_racemase/Decarboxylase_C"/>
</dbReference>
<dbReference type="InterPro" id="IPR011079">
    <property type="entry name" value="Ala_racemase_C"/>
</dbReference>
<dbReference type="InterPro" id="IPR001608">
    <property type="entry name" value="Ala_racemase_N"/>
</dbReference>
<dbReference type="InterPro" id="IPR020622">
    <property type="entry name" value="Ala_racemase_pyridoxalP-BS"/>
</dbReference>
<dbReference type="InterPro" id="IPR029066">
    <property type="entry name" value="PLP-binding_barrel"/>
</dbReference>
<dbReference type="NCBIfam" id="TIGR00492">
    <property type="entry name" value="alr"/>
    <property type="match status" value="1"/>
</dbReference>
<dbReference type="PANTHER" id="PTHR30511">
    <property type="entry name" value="ALANINE RACEMASE"/>
    <property type="match status" value="1"/>
</dbReference>
<dbReference type="PANTHER" id="PTHR30511:SF0">
    <property type="entry name" value="ALANINE RACEMASE, CATABOLIC-RELATED"/>
    <property type="match status" value="1"/>
</dbReference>
<dbReference type="Pfam" id="PF00842">
    <property type="entry name" value="Ala_racemase_C"/>
    <property type="match status" value="1"/>
</dbReference>
<dbReference type="Pfam" id="PF01168">
    <property type="entry name" value="Ala_racemase_N"/>
    <property type="match status" value="1"/>
</dbReference>
<dbReference type="PRINTS" id="PR00992">
    <property type="entry name" value="ALARACEMASE"/>
</dbReference>
<dbReference type="SMART" id="SM01005">
    <property type="entry name" value="Ala_racemase_C"/>
    <property type="match status" value="1"/>
</dbReference>
<dbReference type="SUPFAM" id="SSF50621">
    <property type="entry name" value="Alanine racemase C-terminal domain-like"/>
    <property type="match status" value="1"/>
</dbReference>
<dbReference type="SUPFAM" id="SSF51419">
    <property type="entry name" value="PLP-binding barrel"/>
    <property type="match status" value="1"/>
</dbReference>
<dbReference type="PROSITE" id="PS00395">
    <property type="entry name" value="ALANINE_RACEMASE"/>
    <property type="match status" value="1"/>
</dbReference>
<accession>B9DVI3</accession>
<keyword id="KW-0413">Isomerase</keyword>
<keyword id="KW-0663">Pyridoxal phosphate</keyword>
<keyword id="KW-1185">Reference proteome</keyword>
<feature type="chain" id="PRO_1000164630" description="Alanine racemase">
    <location>
        <begin position="1"/>
        <end position="368"/>
    </location>
</feature>
<feature type="active site" description="Proton acceptor; specific for D-alanine" evidence="1">
    <location>
        <position position="40"/>
    </location>
</feature>
<feature type="active site" description="Proton acceptor; specific for L-alanine" evidence="1">
    <location>
        <position position="263"/>
    </location>
</feature>
<feature type="binding site" evidence="1">
    <location>
        <position position="136"/>
    </location>
    <ligand>
        <name>substrate</name>
    </ligand>
</feature>
<feature type="binding site" evidence="1">
    <location>
        <position position="310"/>
    </location>
    <ligand>
        <name>substrate</name>
    </ligand>
</feature>
<feature type="modified residue" description="N6-(pyridoxal phosphate)lysine" evidence="1">
    <location>
        <position position="40"/>
    </location>
</feature>
<comment type="function">
    <text evidence="1">Catalyzes the interconversion of L-alanine and D-alanine. May also act on other amino acids.</text>
</comment>
<comment type="catalytic activity">
    <reaction evidence="1">
        <text>L-alanine = D-alanine</text>
        <dbReference type="Rhea" id="RHEA:20249"/>
        <dbReference type="ChEBI" id="CHEBI:57416"/>
        <dbReference type="ChEBI" id="CHEBI:57972"/>
        <dbReference type="EC" id="5.1.1.1"/>
    </reaction>
</comment>
<comment type="cofactor">
    <cofactor evidence="1">
        <name>pyridoxal 5'-phosphate</name>
        <dbReference type="ChEBI" id="CHEBI:597326"/>
    </cofactor>
</comment>
<comment type="pathway">
    <text evidence="1">Amino-acid biosynthesis; D-alanine biosynthesis; D-alanine from L-alanine: step 1/1.</text>
</comment>
<comment type="similarity">
    <text evidence="1">Belongs to the alanine racemase family.</text>
</comment>
<organism>
    <name type="scientific">Streptococcus uberis (strain ATCC BAA-854 / 0140J)</name>
    <dbReference type="NCBI Taxonomy" id="218495"/>
    <lineage>
        <taxon>Bacteria</taxon>
        <taxon>Bacillati</taxon>
        <taxon>Bacillota</taxon>
        <taxon>Bacilli</taxon>
        <taxon>Lactobacillales</taxon>
        <taxon>Streptococcaceae</taxon>
        <taxon>Streptococcus</taxon>
    </lineage>
</organism>
<gene>
    <name type="primary">alr</name>
    <name type="ordered locus">SUB1535</name>
</gene>
<reference key="1">
    <citation type="journal article" date="2009" name="BMC Genomics">
        <title>Evidence for niche adaptation in the genome of the bovine pathogen Streptococcus uberis.</title>
        <authorList>
            <person name="Ward P.N."/>
            <person name="Holden M.T.G."/>
            <person name="Leigh J.A."/>
            <person name="Lennard N."/>
            <person name="Bignell A."/>
            <person name="Barron A."/>
            <person name="Clark L."/>
            <person name="Quail M.A."/>
            <person name="Woodward J."/>
            <person name="Barrell B.G."/>
            <person name="Egan S.A."/>
            <person name="Field T.R."/>
            <person name="Maskell D."/>
            <person name="Kehoe M."/>
            <person name="Dowson C.G."/>
            <person name="Chanter N."/>
            <person name="Whatmore A.M."/>
            <person name="Bentley S.D."/>
            <person name="Parkhill J."/>
        </authorList>
    </citation>
    <scope>NUCLEOTIDE SEQUENCE [LARGE SCALE GENOMIC DNA]</scope>
    <source>
        <strain>ATCC BAA-854 / 0140J</strain>
    </source>
</reference>
<sequence>MISSLHRPTVATVDLQAIRDNIKAVQEHISSTTKTFAVVKANAYGHGAIQVAKAVDEEVDAFCVSNLDEALELRQAGIEKDILILGVILANEIPLAIEHSITITVASNEWLESAKACQKDLAQLHVHVKVDSGMGRIGVRSLEEANQLIAGLTKSGAHVDGIFTHFATADEENTDKFHQQLAFFTDLVNALAIKPELVHASNSATSLWHSDTIFNAVRLGIVIYGLNPSGKTLNLPYPLKPALSLSSRLVHIKKIKAGNTVGYGATYTAKTEEYVGTLPIGYADGWTRDMQGYSVIIDGHLCEIIGRVSMDQLTVRLPKAFDIGQEVTLIGQEGHQMISATDIAEKRGTINYEVLCLLSDRIPRHYIN</sequence>